<organism>
    <name type="scientific">Caenorhabditis elegans</name>
    <dbReference type="NCBI Taxonomy" id="6239"/>
    <lineage>
        <taxon>Eukaryota</taxon>
        <taxon>Metazoa</taxon>
        <taxon>Ecdysozoa</taxon>
        <taxon>Nematoda</taxon>
        <taxon>Chromadorea</taxon>
        <taxon>Rhabditida</taxon>
        <taxon>Rhabditina</taxon>
        <taxon>Rhabditomorpha</taxon>
        <taxon>Rhabditoidea</taxon>
        <taxon>Rhabditidae</taxon>
        <taxon>Peloderinae</taxon>
        <taxon>Caenorhabditis</taxon>
    </lineage>
</organism>
<protein>
    <recommendedName>
        <fullName>Uncharacterized protein ZK353.4</fullName>
    </recommendedName>
</protein>
<feature type="chain" id="PRO_0000065512" description="Uncharacterized protein ZK353.4">
    <location>
        <begin position="1"/>
        <end position="290"/>
    </location>
</feature>
<feature type="region of interest" description="Disordered" evidence="1">
    <location>
        <begin position="89"/>
        <end position="157"/>
    </location>
</feature>
<feature type="region of interest" description="Disordered" evidence="1">
    <location>
        <begin position="172"/>
        <end position="217"/>
    </location>
</feature>
<feature type="region of interest" description="Disordered" evidence="1">
    <location>
        <begin position="261"/>
        <end position="290"/>
    </location>
</feature>
<feature type="compositionally biased region" description="Basic and acidic residues" evidence="1">
    <location>
        <begin position="106"/>
        <end position="124"/>
    </location>
</feature>
<feature type="compositionally biased region" description="Basic and acidic residues" evidence="1">
    <location>
        <begin position="142"/>
        <end position="152"/>
    </location>
</feature>
<feature type="compositionally biased region" description="Polar residues" evidence="1">
    <location>
        <begin position="172"/>
        <end position="183"/>
    </location>
</feature>
<feature type="compositionally biased region" description="Polar residues" evidence="1">
    <location>
        <begin position="193"/>
        <end position="202"/>
    </location>
</feature>
<feature type="compositionally biased region" description="Low complexity" evidence="1">
    <location>
        <begin position="207"/>
        <end position="217"/>
    </location>
</feature>
<feature type="compositionally biased region" description="Low complexity" evidence="1">
    <location>
        <begin position="274"/>
        <end position="290"/>
    </location>
</feature>
<proteinExistence type="predicted"/>
<name>YOJ4_CAEEL</name>
<reference key="1">
    <citation type="journal article" date="1994" name="Nature">
        <title>2.2 Mb of contiguous nucleotide sequence from chromosome III of C. elegans.</title>
        <authorList>
            <person name="Wilson R."/>
            <person name="Ainscough R."/>
            <person name="Anderson K."/>
            <person name="Baynes C."/>
            <person name="Berks M."/>
            <person name="Bonfield J."/>
            <person name="Burton J."/>
            <person name="Connell M."/>
            <person name="Copsey T."/>
            <person name="Cooper J."/>
            <person name="Coulson A."/>
            <person name="Craxton M."/>
            <person name="Dear S."/>
            <person name="Du Z."/>
            <person name="Durbin R."/>
            <person name="Favello A."/>
            <person name="Fraser A."/>
            <person name="Fulton L."/>
            <person name="Gardner A."/>
            <person name="Green P."/>
            <person name="Hawkins T."/>
            <person name="Hillier L."/>
            <person name="Jier M."/>
            <person name="Johnston L."/>
            <person name="Jones M."/>
            <person name="Kershaw J."/>
            <person name="Kirsten J."/>
            <person name="Laisster N."/>
            <person name="Latreille P."/>
            <person name="Lightning J."/>
            <person name="Lloyd C."/>
            <person name="Mortimore B."/>
            <person name="O'Callaghan M."/>
            <person name="Parsons J."/>
            <person name="Percy C."/>
            <person name="Rifken L."/>
            <person name="Roopra A."/>
            <person name="Saunders D."/>
            <person name="Shownkeen R."/>
            <person name="Sims M."/>
            <person name="Smaldon N."/>
            <person name="Smith A."/>
            <person name="Smith M."/>
            <person name="Sonnhammer E."/>
            <person name="Staden R."/>
            <person name="Sulston J."/>
            <person name="Thierry-Mieg J."/>
            <person name="Thomas K."/>
            <person name="Vaudin M."/>
            <person name="Vaughan K."/>
            <person name="Waterston R."/>
            <person name="Watson A."/>
            <person name="Weinstock L."/>
            <person name="Wilkinson-Sproat J."/>
            <person name="Wohldman P."/>
        </authorList>
    </citation>
    <scope>NUCLEOTIDE SEQUENCE [LARGE SCALE GENOMIC DNA]</scope>
    <source>
        <strain>Bristol N2</strain>
    </source>
</reference>
<reference key="2">
    <citation type="journal article" date="1998" name="Science">
        <title>Genome sequence of the nematode C. elegans: a platform for investigating biology.</title>
        <authorList>
            <consortium name="The C. elegans sequencing consortium"/>
        </authorList>
    </citation>
    <scope>NUCLEOTIDE SEQUENCE [LARGE SCALE GENOMIC DNA]</scope>
    <source>
        <strain>Bristol N2</strain>
    </source>
</reference>
<dbReference type="EMBL" id="FO081668">
    <property type="protein sequence ID" value="CCD73210.1"/>
    <property type="molecule type" value="Genomic_DNA"/>
</dbReference>
<dbReference type="PIR" id="S44661">
    <property type="entry name" value="S44661"/>
</dbReference>
<dbReference type="RefSeq" id="NP_498850.2">
    <property type="nucleotide sequence ID" value="NM_066449.3"/>
</dbReference>
<dbReference type="SMR" id="P34627"/>
<dbReference type="BioGRID" id="55827">
    <property type="interactions" value="2"/>
</dbReference>
<dbReference type="PaxDb" id="6239-ZK353.4"/>
<dbReference type="EnsemblMetazoa" id="ZK353.4.1">
    <property type="protein sequence ID" value="ZK353.4.1"/>
    <property type="gene ID" value="WBGene00022700"/>
</dbReference>
<dbReference type="GeneID" id="191288"/>
<dbReference type="KEGG" id="cel:CELE_ZK353.4"/>
<dbReference type="UCSC" id="ZK353.4">
    <property type="organism name" value="c. elegans"/>
</dbReference>
<dbReference type="AGR" id="WB:WBGene00022700"/>
<dbReference type="CTD" id="191288"/>
<dbReference type="WormBase" id="ZK353.4">
    <property type="protein sequence ID" value="CE46055"/>
    <property type="gene ID" value="WBGene00022700"/>
</dbReference>
<dbReference type="eggNOG" id="ENOG502THRP">
    <property type="taxonomic scope" value="Eukaryota"/>
</dbReference>
<dbReference type="HOGENOM" id="CLU_960537_0_0_1"/>
<dbReference type="InParanoid" id="P34627"/>
<dbReference type="OMA" id="NWIAWSF"/>
<dbReference type="OrthoDB" id="5830389at2759"/>
<dbReference type="PhylomeDB" id="P34627"/>
<dbReference type="PRO" id="PR:P34627"/>
<dbReference type="Proteomes" id="UP000001940">
    <property type="component" value="Chromosome III"/>
</dbReference>
<dbReference type="Bgee" id="WBGene00022700">
    <property type="expression patterns" value="Expressed in larva and 1 other cell type or tissue"/>
</dbReference>
<accession>P34627</accession>
<keyword id="KW-1185">Reference proteome</keyword>
<evidence type="ECO:0000256" key="1">
    <source>
        <dbReference type="SAM" id="MobiDB-lite"/>
    </source>
</evidence>
<gene>
    <name type="ORF">ZK353.4</name>
</gene>
<sequence length="290" mass="31432">MLEDKGELSIKEVLKCLPISEKSPANWAAWCFGLILVVLILIVTGYMFVVYLRSQRKKNQLADETGGIEIENSIRDPVVINNSLASRSCSENKVKKQSPESTEQDDFSKTTVDETIKEKSEKQPKTCAQKPKVPIPKASTPKTEKLVSKEPSTEELSVKNSLTDLKNEATKMANTSSSANRTGEISVEIVSPKPTTAVQASTPEKPMSSAESAMESSIGSDISTYIVSSKRSEVNNYNMIEAGRTPPMSFSESYAQTAIPTANTPPTVVHVSKPSSETSVSIPPSSAVKK</sequence>